<dbReference type="EC" id="3.1.-.-" evidence="1"/>
<dbReference type="EMBL" id="AL123456">
    <property type="protein sequence ID" value="CCP45345.1"/>
    <property type="molecule type" value="Genomic_DNA"/>
</dbReference>
<dbReference type="PIR" id="A70660">
    <property type="entry name" value="A70660"/>
</dbReference>
<dbReference type="RefSeq" id="NP_217065.1">
    <property type="nucleotide sequence ID" value="NC_000962.3"/>
</dbReference>
<dbReference type="RefSeq" id="WP_003413180.1">
    <property type="nucleotide sequence ID" value="NZ_NVQJ01000032.1"/>
</dbReference>
<dbReference type="PDB" id="5WZ4">
    <property type="method" value="X-ray"/>
    <property type="resolution" value="1.77 A"/>
    <property type="chains" value="A/B=2-131"/>
</dbReference>
<dbReference type="PDB" id="5WZF">
    <property type="method" value="X-ray"/>
    <property type="resolution" value="1.75 A"/>
    <property type="chains" value="A/B=2-131"/>
</dbReference>
<dbReference type="PDBsum" id="5WZ4"/>
<dbReference type="PDBsum" id="5WZF"/>
<dbReference type="SMR" id="P95004"/>
<dbReference type="STRING" id="83332.Rv2549c"/>
<dbReference type="PaxDb" id="83332-Rv2549c"/>
<dbReference type="DNASU" id="887193"/>
<dbReference type="GeneID" id="887193"/>
<dbReference type="KEGG" id="mtu:Rv2549c"/>
<dbReference type="KEGG" id="mtv:RVBD_2549c"/>
<dbReference type="TubercuList" id="Rv2549c"/>
<dbReference type="eggNOG" id="COG2402">
    <property type="taxonomic scope" value="Bacteria"/>
</dbReference>
<dbReference type="InParanoid" id="P95004"/>
<dbReference type="OrthoDB" id="4724868at2"/>
<dbReference type="Proteomes" id="UP000001584">
    <property type="component" value="Chromosome"/>
</dbReference>
<dbReference type="GO" id="GO:0000287">
    <property type="term" value="F:magnesium ion binding"/>
    <property type="evidence" value="ECO:0007669"/>
    <property type="project" value="UniProtKB-UniRule"/>
</dbReference>
<dbReference type="GO" id="GO:0004521">
    <property type="term" value="F:RNA endonuclease activity"/>
    <property type="evidence" value="ECO:0000314"/>
    <property type="project" value="UniProtKB"/>
</dbReference>
<dbReference type="GO" id="GO:0016075">
    <property type="term" value="P:rRNA catabolic process"/>
    <property type="evidence" value="ECO:0000314"/>
    <property type="project" value="UniProtKB"/>
</dbReference>
<dbReference type="GO" id="GO:0044003">
    <property type="term" value="P:symbiont-mediated perturbation of host process"/>
    <property type="evidence" value="ECO:0000315"/>
    <property type="project" value="MTBBASE"/>
</dbReference>
<dbReference type="CDD" id="cd18680">
    <property type="entry name" value="PIN_MtVapC20-like"/>
    <property type="match status" value="1"/>
</dbReference>
<dbReference type="FunFam" id="3.40.50.1010:FF:000042">
    <property type="entry name" value="Ribonuclease VapC"/>
    <property type="match status" value="1"/>
</dbReference>
<dbReference type="Gene3D" id="3.40.50.1010">
    <property type="entry name" value="5'-nuclease"/>
    <property type="match status" value="1"/>
</dbReference>
<dbReference type="HAMAP" id="MF_00265">
    <property type="entry name" value="VapC_Nob1"/>
    <property type="match status" value="1"/>
</dbReference>
<dbReference type="InterPro" id="IPR029060">
    <property type="entry name" value="PIN-like_dom_sf"/>
</dbReference>
<dbReference type="InterPro" id="IPR002716">
    <property type="entry name" value="PIN_dom"/>
</dbReference>
<dbReference type="InterPro" id="IPR039018">
    <property type="entry name" value="VapC20-like"/>
</dbReference>
<dbReference type="InterPro" id="IPR022907">
    <property type="entry name" value="VapC_family"/>
</dbReference>
<dbReference type="PANTHER" id="PTHR42188">
    <property type="entry name" value="23S RRNA-SPECIFIC ENDONUCLEASE VAPC20"/>
    <property type="match status" value="1"/>
</dbReference>
<dbReference type="PANTHER" id="PTHR42188:SF1">
    <property type="entry name" value="23S RRNA-SPECIFIC ENDONUCLEASE VAPC20"/>
    <property type="match status" value="1"/>
</dbReference>
<dbReference type="Pfam" id="PF01850">
    <property type="entry name" value="PIN"/>
    <property type="match status" value="1"/>
</dbReference>
<dbReference type="SUPFAM" id="SSF88723">
    <property type="entry name" value="PIN domain-like"/>
    <property type="match status" value="1"/>
</dbReference>
<protein>
    <recommendedName>
        <fullName evidence="4">23S rRNA-specific endonuclease VapC20</fullName>
        <ecNumber evidence="1">3.1.-.-</ecNumber>
    </recommendedName>
    <alternativeName>
        <fullName evidence="1">Ribonuclease VapC20</fullName>
        <shortName evidence="1">RNase VapC20</shortName>
    </alternativeName>
    <alternativeName>
        <fullName evidence="1">Toxin VapC20</fullName>
    </alternativeName>
</protein>
<name>VPC20_MYCTU</name>
<reference key="1">
    <citation type="journal article" date="1998" name="Nature">
        <title>Deciphering the biology of Mycobacterium tuberculosis from the complete genome sequence.</title>
        <authorList>
            <person name="Cole S.T."/>
            <person name="Brosch R."/>
            <person name="Parkhill J."/>
            <person name="Garnier T."/>
            <person name="Churcher C.M."/>
            <person name="Harris D.E."/>
            <person name="Gordon S.V."/>
            <person name="Eiglmeier K."/>
            <person name="Gas S."/>
            <person name="Barry C.E. III"/>
            <person name="Tekaia F."/>
            <person name="Badcock K."/>
            <person name="Basham D."/>
            <person name="Brown D."/>
            <person name="Chillingworth T."/>
            <person name="Connor R."/>
            <person name="Davies R.M."/>
            <person name="Devlin K."/>
            <person name="Feltwell T."/>
            <person name="Gentles S."/>
            <person name="Hamlin N."/>
            <person name="Holroyd S."/>
            <person name="Hornsby T."/>
            <person name="Jagels K."/>
            <person name="Krogh A."/>
            <person name="McLean J."/>
            <person name="Moule S."/>
            <person name="Murphy L.D."/>
            <person name="Oliver S."/>
            <person name="Osborne J."/>
            <person name="Quail M.A."/>
            <person name="Rajandream M.A."/>
            <person name="Rogers J."/>
            <person name="Rutter S."/>
            <person name="Seeger K."/>
            <person name="Skelton S."/>
            <person name="Squares S."/>
            <person name="Squares R."/>
            <person name="Sulston J.E."/>
            <person name="Taylor K."/>
            <person name="Whitehead S."/>
            <person name="Barrell B.G."/>
        </authorList>
    </citation>
    <scope>NUCLEOTIDE SEQUENCE [LARGE SCALE GENOMIC DNA]</scope>
    <source>
        <strain>ATCC 25618 / H37Rv</strain>
    </source>
</reference>
<reference key="2">
    <citation type="journal article" date="2005" name="Nucleic Acids Res.">
        <title>Toxin-antitoxin loci are highly abundant in free-living but lost from host-associated prokaryotes.</title>
        <authorList>
            <person name="Pandey D.P."/>
            <person name="Gerdes K."/>
        </authorList>
    </citation>
    <scope>POSSIBLE FUNCTION</scope>
    <source>
        <strain>ATCC 25618 / H37Rv</strain>
    </source>
</reference>
<reference key="3">
    <citation type="journal article" date="2009" name="FEMS Microbiol. Lett.">
        <title>Killing activity and rescue function of genome-wide toxin-antitoxin loci of Mycobacterium tuberculosis.</title>
        <authorList>
            <person name="Gupta A."/>
        </authorList>
    </citation>
    <scope>EXPRESSION IN E.COLI</scope>
    <scope>FUNCTION AS A TOXIN</scope>
    <source>
        <strain>ATCC 25618 / H37Rv</strain>
    </source>
</reference>
<reference key="4">
    <citation type="journal article" date="2011" name="Mol. Cell. Proteomics">
        <title>Proteogenomic analysis of Mycobacterium tuberculosis by high resolution mass spectrometry.</title>
        <authorList>
            <person name="Kelkar D.S."/>
            <person name="Kumar D."/>
            <person name="Kumar P."/>
            <person name="Balakrishnan L."/>
            <person name="Muthusamy B."/>
            <person name="Yadav A.K."/>
            <person name="Shrivastava P."/>
            <person name="Marimuthu A."/>
            <person name="Anand S."/>
            <person name="Sundaram H."/>
            <person name="Kingsbury R."/>
            <person name="Harsha H.C."/>
            <person name="Nair B."/>
            <person name="Prasad T.S."/>
            <person name="Chauhan D.S."/>
            <person name="Katoch K."/>
            <person name="Katoch V.M."/>
            <person name="Kumar P."/>
            <person name="Chaerkady R."/>
            <person name="Ramachandran S."/>
            <person name="Dash D."/>
            <person name="Pandey A."/>
        </authorList>
    </citation>
    <scope>IDENTIFICATION BY MASS SPECTROMETRY [LARGE SCALE ANALYSIS]</scope>
    <source>
        <strain>ATCC 25618 / H37Rv</strain>
    </source>
</reference>
<reference key="5">
    <citation type="journal article" date="2013" name="Nat. Commun.">
        <title>VapC20 of Mycobacterium tuberculosis cleaves the sarcin-ricin loop of 23S rRNA.</title>
        <authorList>
            <person name="Winther K.S."/>
            <person name="Brodersen D.E."/>
            <person name="Brown A.K."/>
            <person name="Gerdes K."/>
        </authorList>
    </citation>
    <scope>FUNCTION</scope>
    <scope>ACTIVITY REGULATION</scope>
    <scope>EXPRESSION IN E.COLI AND M.SMEGMATIS</scope>
    <scope>MUTAGENESIS OF ASP-5</scope>
    <source>
        <strain>ATCC 25618 / H37Rv</strain>
    </source>
</reference>
<sequence length="131" mass="14620">MIFVDTSFWAALGNAGDARHGTAKRLWASKPPVVMTSNHVLGETWTLLNRRCGHRAAVAAAAIRLSTVVRVEHVTADLEEQAWEWLVRHDEREYSFVDATSFAVMRKKGIQNAYAFDGDFSAAGFVEVRPE</sequence>
<comment type="function">
    <text evidence="1 2 3">Toxic component of a type II toxin-antitoxin (TA) system (PubMed:19016878, PubMed:24225902). An endoribonuclease that cleaves both E.coli and M.smegmatis 23S rRNA between G2661 and A2662 in the sarcin-ricin loop (SRL, E.coli 23S rRNA numbering). The SRL sequence is highly conserved and is implicated in GTP hydrolysis by EF-Tu and EF-G. Acts on purified ribosomes but not on isolated RNA in E.coli, nor on a shortened artificial substrate (PubMed:24225902). Upon expression in E.coli inhibits cell growth, colony formation and translation. Its toxic effect is neutralized by coexpression, or subsequent expression (tested over 2 hours) with cognate antitoxin VapB20 (PubMed:19016878, PubMed:24225902).</text>
</comment>
<comment type="cofactor">
    <cofactor evidence="1">
        <name>Mg(2+)</name>
        <dbReference type="ChEBI" id="CHEBI:18420"/>
    </cofactor>
</comment>
<comment type="activity regulation">
    <text evidence="3">Inhibited by EDTA.</text>
</comment>
<comment type="similarity">
    <text evidence="1">Belongs to the PINc/VapC protein family.</text>
</comment>
<organism>
    <name type="scientific">Mycobacterium tuberculosis (strain ATCC 25618 / H37Rv)</name>
    <dbReference type="NCBI Taxonomy" id="83332"/>
    <lineage>
        <taxon>Bacteria</taxon>
        <taxon>Bacillati</taxon>
        <taxon>Actinomycetota</taxon>
        <taxon>Actinomycetes</taxon>
        <taxon>Mycobacteriales</taxon>
        <taxon>Mycobacteriaceae</taxon>
        <taxon>Mycobacterium</taxon>
        <taxon>Mycobacterium tuberculosis complex</taxon>
    </lineage>
</organism>
<gene>
    <name evidence="1" type="primary">vapC20</name>
    <name type="ordered locus">Rv2549c</name>
</gene>
<proteinExistence type="evidence at protein level"/>
<evidence type="ECO:0000255" key="1">
    <source>
        <dbReference type="HAMAP-Rule" id="MF_00265"/>
    </source>
</evidence>
<evidence type="ECO:0000269" key="2">
    <source>
    </source>
</evidence>
<evidence type="ECO:0000269" key="3">
    <source>
    </source>
</evidence>
<evidence type="ECO:0000305" key="4">
    <source>
    </source>
</evidence>
<evidence type="ECO:0007829" key="5">
    <source>
        <dbReference type="PDB" id="5WZF"/>
    </source>
</evidence>
<feature type="chain" id="PRO_0000407879" description="23S rRNA-specific endonuclease VapC20">
    <location>
        <begin position="1"/>
        <end position="131"/>
    </location>
</feature>
<feature type="domain" description="PINc" evidence="1">
    <location>
        <begin position="2"/>
        <end position="130"/>
    </location>
</feature>
<feature type="binding site" evidence="1">
    <location>
        <position position="5"/>
    </location>
    <ligand>
        <name>Mg(2+)</name>
        <dbReference type="ChEBI" id="CHEBI:18420"/>
    </ligand>
</feature>
<feature type="binding site" evidence="1">
    <location>
        <position position="98"/>
    </location>
    <ligand>
        <name>Mg(2+)</name>
        <dbReference type="ChEBI" id="CHEBI:18420"/>
    </ligand>
</feature>
<feature type="mutagenesis site" description="Loss of 23S rRNA cleavage." evidence="3">
    <original>D</original>
    <variation>A</variation>
    <location>
        <position position="5"/>
    </location>
</feature>
<feature type="strand" evidence="5">
    <location>
        <begin position="2"/>
        <end position="4"/>
    </location>
</feature>
<feature type="helix" evidence="5">
    <location>
        <begin position="6"/>
        <end position="12"/>
    </location>
</feature>
<feature type="helix" evidence="5">
    <location>
        <begin position="20"/>
        <end position="28"/>
    </location>
</feature>
<feature type="strand" evidence="5">
    <location>
        <begin position="34"/>
        <end position="37"/>
    </location>
</feature>
<feature type="helix" evidence="5">
    <location>
        <begin position="38"/>
        <end position="51"/>
    </location>
</feature>
<feature type="helix" evidence="5">
    <location>
        <begin position="54"/>
        <end position="62"/>
    </location>
</feature>
<feature type="helix" evidence="5">
    <location>
        <begin position="63"/>
        <end position="65"/>
    </location>
</feature>
<feature type="strand" evidence="5">
    <location>
        <begin position="67"/>
        <end position="72"/>
    </location>
</feature>
<feature type="helix" evidence="5">
    <location>
        <begin position="76"/>
        <end position="88"/>
    </location>
</feature>
<feature type="helix" evidence="5">
    <location>
        <begin position="96"/>
        <end position="108"/>
    </location>
</feature>
<feature type="strand" evidence="5">
    <location>
        <begin position="112"/>
        <end position="114"/>
    </location>
</feature>
<feature type="helix" evidence="5">
    <location>
        <begin position="119"/>
        <end position="122"/>
    </location>
</feature>
<accession>P95004</accession>
<accession>L0T9Y5</accession>
<keyword id="KW-0002">3D-structure</keyword>
<keyword id="KW-0255">Endonuclease</keyword>
<keyword id="KW-0378">Hydrolase</keyword>
<keyword id="KW-0460">Magnesium</keyword>
<keyword id="KW-0479">Metal-binding</keyword>
<keyword id="KW-0540">Nuclease</keyword>
<keyword id="KW-1185">Reference proteome</keyword>
<keyword id="KW-1277">Toxin-antitoxin system</keyword>